<reference key="1">
    <citation type="submission" date="2008-10" db="EMBL/GenBank/DDBJ databases">
        <title>Genome sequence of Bacillus cereus B4264.</title>
        <authorList>
            <person name="Dodson R.J."/>
            <person name="Durkin A.S."/>
            <person name="Rosovitz M.J."/>
            <person name="Rasko D.A."/>
            <person name="Hoffmaster A."/>
            <person name="Ravel J."/>
            <person name="Sutton G."/>
        </authorList>
    </citation>
    <scope>NUCLEOTIDE SEQUENCE [LARGE SCALE GENOMIC DNA]</scope>
    <source>
        <strain>B4264</strain>
    </source>
</reference>
<comment type="function">
    <text evidence="1">Catalyzes the conversion of 1-hydroxy-2-methyl-2-(E)-butenyl 4-diphosphate (HMBPP) into a mixture of isopentenyl diphosphate (IPP) and dimethylallyl diphosphate (DMAPP). Acts in the terminal step of the DOXP/MEP pathway for isoprenoid precursor biosynthesis.</text>
</comment>
<comment type="catalytic activity">
    <reaction evidence="1">
        <text>isopentenyl diphosphate + 2 oxidized [2Fe-2S]-[ferredoxin] + H2O = (2E)-4-hydroxy-3-methylbut-2-enyl diphosphate + 2 reduced [2Fe-2S]-[ferredoxin] + 2 H(+)</text>
        <dbReference type="Rhea" id="RHEA:24488"/>
        <dbReference type="Rhea" id="RHEA-COMP:10000"/>
        <dbReference type="Rhea" id="RHEA-COMP:10001"/>
        <dbReference type="ChEBI" id="CHEBI:15377"/>
        <dbReference type="ChEBI" id="CHEBI:15378"/>
        <dbReference type="ChEBI" id="CHEBI:33737"/>
        <dbReference type="ChEBI" id="CHEBI:33738"/>
        <dbReference type="ChEBI" id="CHEBI:128753"/>
        <dbReference type="ChEBI" id="CHEBI:128769"/>
        <dbReference type="EC" id="1.17.7.4"/>
    </reaction>
</comment>
<comment type="catalytic activity">
    <reaction evidence="1">
        <text>dimethylallyl diphosphate + 2 oxidized [2Fe-2S]-[ferredoxin] + H2O = (2E)-4-hydroxy-3-methylbut-2-enyl diphosphate + 2 reduced [2Fe-2S]-[ferredoxin] + 2 H(+)</text>
        <dbReference type="Rhea" id="RHEA:24825"/>
        <dbReference type="Rhea" id="RHEA-COMP:10000"/>
        <dbReference type="Rhea" id="RHEA-COMP:10001"/>
        <dbReference type="ChEBI" id="CHEBI:15377"/>
        <dbReference type="ChEBI" id="CHEBI:15378"/>
        <dbReference type="ChEBI" id="CHEBI:33737"/>
        <dbReference type="ChEBI" id="CHEBI:33738"/>
        <dbReference type="ChEBI" id="CHEBI:57623"/>
        <dbReference type="ChEBI" id="CHEBI:128753"/>
        <dbReference type="EC" id="1.17.7.4"/>
    </reaction>
</comment>
<comment type="cofactor">
    <cofactor evidence="1">
        <name>[4Fe-4S] cluster</name>
        <dbReference type="ChEBI" id="CHEBI:49883"/>
    </cofactor>
    <text evidence="1">Binds 1 [4Fe-4S] cluster per subunit.</text>
</comment>
<comment type="pathway">
    <text evidence="1">Isoprenoid biosynthesis; dimethylallyl diphosphate biosynthesis; dimethylallyl diphosphate from (2E)-4-hydroxy-3-methylbutenyl diphosphate: step 1/1.</text>
</comment>
<comment type="pathway">
    <text evidence="1">Isoprenoid biosynthesis; isopentenyl diphosphate biosynthesis via DXP pathway; isopentenyl diphosphate from 1-deoxy-D-xylulose 5-phosphate: step 6/6.</text>
</comment>
<comment type="similarity">
    <text evidence="1">Belongs to the IspH family.</text>
</comment>
<keyword id="KW-0004">4Fe-4S</keyword>
<keyword id="KW-0408">Iron</keyword>
<keyword id="KW-0411">Iron-sulfur</keyword>
<keyword id="KW-0414">Isoprene biosynthesis</keyword>
<keyword id="KW-0479">Metal-binding</keyword>
<keyword id="KW-0560">Oxidoreductase</keyword>
<organism>
    <name type="scientific">Bacillus cereus (strain B4264)</name>
    <dbReference type="NCBI Taxonomy" id="405532"/>
    <lineage>
        <taxon>Bacteria</taxon>
        <taxon>Bacillati</taxon>
        <taxon>Bacillota</taxon>
        <taxon>Bacilli</taxon>
        <taxon>Bacillales</taxon>
        <taxon>Bacillaceae</taxon>
        <taxon>Bacillus</taxon>
        <taxon>Bacillus cereus group</taxon>
    </lineage>
</organism>
<feature type="chain" id="PRO_1000118600" description="4-hydroxy-3-methylbut-2-enyl diphosphate reductase">
    <location>
        <begin position="1"/>
        <end position="316"/>
    </location>
</feature>
<feature type="active site" description="Proton donor" evidence="1">
    <location>
        <position position="133"/>
    </location>
</feature>
<feature type="binding site" evidence="1">
    <location>
        <position position="12"/>
    </location>
    <ligand>
        <name>[4Fe-4S] cluster</name>
        <dbReference type="ChEBI" id="CHEBI:49883"/>
    </ligand>
</feature>
<feature type="binding site" evidence="1">
    <location>
        <position position="43"/>
    </location>
    <ligand>
        <name>(2E)-4-hydroxy-3-methylbut-2-enyl diphosphate</name>
        <dbReference type="ChEBI" id="CHEBI:128753"/>
    </ligand>
</feature>
<feature type="binding site" evidence="1">
    <location>
        <position position="43"/>
    </location>
    <ligand>
        <name>dimethylallyl diphosphate</name>
        <dbReference type="ChEBI" id="CHEBI:57623"/>
    </ligand>
</feature>
<feature type="binding site" evidence="1">
    <location>
        <position position="43"/>
    </location>
    <ligand>
        <name>isopentenyl diphosphate</name>
        <dbReference type="ChEBI" id="CHEBI:128769"/>
    </ligand>
</feature>
<feature type="binding site" evidence="1">
    <location>
        <position position="81"/>
    </location>
    <ligand>
        <name>(2E)-4-hydroxy-3-methylbut-2-enyl diphosphate</name>
        <dbReference type="ChEBI" id="CHEBI:128753"/>
    </ligand>
</feature>
<feature type="binding site" evidence="1">
    <location>
        <position position="81"/>
    </location>
    <ligand>
        <name>dimethylallyl diphosphate</name>
        <dbReference type="ChEBI" id="CHEBI:57623"/>
    </ligand>
</feature>
<feature type="binding site" evidence="1">
    <location>
        <position position="81"/>
    </location>
    <ligand>
        <name>isopentenyl diphosphate</name>
        <dbReference type="ChEBI" id="CHEBI:128769"/>
    </ligand>
</feature>
<feature type="binding site" evidence="1">
    <location>
        <position position="103"/>
    </location>
    <ligand>
        <name>[4Fe-4S] cluster</name>
        <dbReference type="ChEBI" id="CHEBI:49883"/>
    </ligand>
</feature>
<feature type="binding site" evidence="1">
    <location>
        <position position="131"/>
    </location>
    <ligand>
        <name>(2E)-4-hydroxy-3-methylbut-2-enyl diphosphate</name>
        <dbReference type="ChEBI" id="CHEBI:128753"/>
    </ligand>
</feature>
<feature type="binding site" evidence="1">
    <location>
        <position position="131"/>
    </location>
    <ligand>
        <name>dimethylallyl diphosphate</name>
        <dbReference type="ChEBI" id="CHEBI:57623"/>
    </ligand>
</feature>
<feature type="binding site" evidence="1">
    <location>
        <position position="131"/>
    </location>
    <ligand>
        <name>isopentenyl diphosphate</name>
        <dbReference type="ChEBI" id="CHEBI:128769"/>
    </ligand>
</feature>
<feature type="binding site" evidence="1">
    <location>
        <position position="170"/>
    </location>
    <ligand>
        <name>(2E)-4-hydroxy-3-methylbut-2-enyl diphosphate</name>
        <dbReference type="ChEBI" id="CHEBI:128753"/>
    </ligand>
</feature>
<feature type="binding site" evidence="1">
    <location>
        <position position="198"/>
    </location>
    <ligand>
        <name>[4Fe-4S] cluster</name>
        <dbReference type="ChEBI" id="CHEBI:49883"/>
    </ligand>
</feature>
<feature type="binding site" evidence="1">
    <location>
        <position position="226"/>
    </location>
    <ligand>
        <name>(2E)-4-hydroxy-3-methylbut-2-enyl diphosphate</name>
        <dbReference type="ChEBI" id="CHEBI:128753"/>
    </ligand>
</feature>
<feature type="binding site" evidence="1">
    <location>
        <position position="226"/>
    </location>
    <ligand>
        <name>dimethylallyl diphosphate</name>
        <dbReference type="ChEBI" id="CHEBI:57623"/>
    </ligand>
</feature>
<feature type="binding site" evidence="1">
    <location>
        <position position="226"/>
    </location>
    <ligand>
        <name>isopentenyl diphosphate</name>
        <dbReference type="ChEBI" id="CHEBI:128769"/>
    </ligand>
</feature>
<feature type="binding site" evidence="1">
    <location>
        <position position="228"/>
    </location>
    <ligand>
        <name>(2E)-4-hydroxy-3-methylbut-2-enyl diphosphate</name>
        <dbReference type="ChEBI" id="CHEBI:128753"/>
    </ligand>
</feature>
<feature type="binding site" evidence="1">
    <location>
        <position position="228"/>
    </location>
    <ligand>
        <name>dimethylallyl diphosphate</name>
        <dbReference type="ChEBI" id="CHEBI:57623"/>
    </ligand>
</feature>
<feature type="binding site" evidence="1">
    <location>
        <position position="228"/>
    </location>
    <ligand>
        <name>isopentenyl diphosphate</name>
        <dbReference type="ChEBI" id="CHEBI:128769"/>
    </ligand>
</feature>
<feature type="binding site" evidence="1">
    <location>
        <position position="271"/>
    </location>
    <ligand>
        <name>(2E)-4-hydroxy-3-methylbut-2-enyl diphosphate</name>
        <dbReference type="ChEBI" id="CHEBI:128753"/>
    </ligand>
</feature>
<feature type="binding site" evidence="1">
    <location>
        <position position="271"/>
    </location>
    <ligand>
        <name>dimethylallyl diphosphate</name>
        <dbReference type="ChEBI" id="CHEBI:57623"/>
    </ligand>
</feature>
<feature type="binding site" evidence="1">
    <location>
        <position position="271"/>
    </location>
    <ligand>
        <name>isopentenyl diphosphate</name>
        <dbReference type="ChEBI" id="CHEBI:128769"/>
    </ligand>
</feature>
<gene>
    <name evidence="1" type="primary">ispH</name>
    <name type="ordered locus">BCB4264_A4405</name>
</gene>
<sequence>MKIVKISPRGYCYGVVDAMVIARNAALDKSLPRPIYILGMIVHNKHVTDAFEEDGIITLDGPSRLEILDKIDSGTVIFTAHGVSPEVKQRAKEKGLTTIDATCPDVTKTHDLIEAKKAEGYHVIYIGKKNHPEPEGAVGIAPDIVHLIERADDLKTLEIPTDKILVTNQTTMSQWDVQHLMEDIQKKFPTAEFHKEICLATQVRQEAVAKQADVADLTIVVGDPKSNNSNRLAQVSQEIAGTKAYRVADVSEIQLEWLQGVENVAVTAGASTPTPITKEVIAFLEQYNPMNPATWERVRKVPLQKILPRVKVKKEQ</sequence>
<proteinExistence type="inferred from homology"/>
<protein>
    <recommendedName>
        <fullName evidence="1">4-hydroxy-3-methylbut-2-enyl diphosphate reductase</fullName>
        <shortName evidence="1">HMBPP reductase</shortName>
        <ecNumber evidence="1">1.17.7.4</ecNumber>
    </recommendedName>
</protein>
<name>ISPH_BACC4</name>
<dbReference type="EC" id="1.17.7.4" evidence="1"/>
<dbReference type="EMBL" id="CP001176">
    <property type="protein sequence ID" value="ACK63231.1"/>
    <property type="molecule type" value="Genomic_DNA"/>
</dbReference>
<dbReference type="RefSeq" id="WP_000706662.1">
    <property type="nucleotide sequence ID" value="NZ_VEHB01000006.1"/>
</dbReference>
<dbReference type="SMR" id="B7HCR2"/>
<dbReference type="KEGG" id="bcb:BCB4264_A4405"/>
<dbReference type="HOGENOM" id="CLU_027486_0_0_9"/>
<dbReference type="UniPathway" id="UPA00056">
    <property type="reaction ID" value="UER00097"/>
</dbReference>
<dbReference type="UniPathway" id="UPA00059">
    <property type="reaction ID" value="UER00105"/>
</dbReference>
<dbReference type="Proteomes" id="UP000007096">
    <property type="component" value="Chromosome"/>
</dbReference>
<dbReference type="GO" id="GO:0051539">
    <property type="term" value="F:4 iron, 4 sulfur cluster binding"/>
    <property type="evidence" value="ECO:0007669"/>
    <property type="project" value="UniProtKB-UniRule"/>
</dbReference>
<dbReference type="GO" id="GO:0051745">
    <property type="term" value="F:4-hydroxy-3-methylbut-2-enyl diphosphate reductase activity"/>
    <property type="evidence" value="ECO:0007669"/>
    <property type="project" value="UniProtKB-UniRule"/>
</dbReference>
<dbReference type="GO" id="GO:0046872">
    <property type="term" value="F:metal ion binding"/>
    <property type="evidence" value="ECO:0007669"/>
    <property type="project" value="UniProtKB-KW"/>
</dbReference>
<dbReference type="GO" id="GO:0050992">
    <property type="term" value="P:dimethylallyl diphosphate biosynthetic process"/>
    <property type="evidence" value="ECO:0007669"/>
    <property type="project" value="UniProtKB-UniRule"/>
</dbReference>
<dbReference type="GO" id="GO:0019288">
    <property type="term" value="P:isopentenyl diphosphate biosynthetic process, methylerythritol 4-phosphate pathway"/>
    <property type="evidence" value="ECO:0007669"/>
    <property type="project" value="UniProtKB-UniRule"/>
</dbReference>
<dbReference type="GO" id="GO:0016114">
    <property type="term" value="P:terpenoid biosynthetic process"/>
    <property type="evidence" value="ECO:0007669"/>
    <property type="project" value="UniProtKB-UniRule"/>
</dbReference>
<dbReference type="CDD" id="cd13944">
    <property type="entry name" value="lytB_ispH"/>
    <property type="match status" value="1"/>
</dbReference>
<dbReference type="Gene3D" id="3.40.50.11270">
    <property type="match status" value="1"/>
</dbReference>
<dbReference type="Gene3D" id="3.40.1010.20">
    <property type="entry name" value="4-hydroxy-3-methylbut-2-enyl diphosphate reductase, catalytic domain"/>
    <property type="match status" value="2"/>
</dbReference>
<dbReference type="HAMAP" id="MF_00191">
    <property type="entry name" value="IspH"/>
    <property type="match status" value="1"/>
</dbReference>
<dbReference type="InterPro" id="IPR003451">
    <property type="entry name" value="LytB/IspH"/>
</dbReference>
<dbReference type="NCBIfam" id="TIGR00216">
    <property type="entry name" value="ispH_lytB"/>
    <property type="match status" value="1"/>
</dbReference>
<dbReference type="NCBIfam" id="NF002187">
    <property type="entry name" value="PRK01045.1-1"/>
    <property type="match status" value="1"/>
</dbReference>
<dbReference type="PANTHER" id="PTHR30426">
    <property type="entry name" value="4-HYDROXY-3-METHYLBUT-2-ENYL DIPHOSPHATE REDUCTASE"/>
    <property type="match status" value="1"/>
</dbReference>
<dbReference type="PANTHER" id="PTHR30426:SF0">
    <property type="entry name" value="4-HYDROXY-3-METHYLBUT-2-ENYL DIPHOSPHATE REDUCTASE"/>
    <property type="match status" value="1"/>
</dbReference>
<dbReference type="Pfam" id="PF02401">
    <property type="entry name" value="LYTB"/>
    <property type="match status" value="1"/>
</dbReference>
<evidence type="ECO:0000255" key="1">
    <source>
        <dbReference type="HAMAP-Rule" id="MF_00191"/>
    </source>
</evidence>
<accession>B7HCR2</accession>